<dbReference type="EMBL" id="BA000019">
    <property type="protein sequence ID" value="BAB74867.1"/>
    <property type="status" value="ALT_INIT"/>
    <property type="molecule type" value="Genomic_DNA"/>
</dbReference>
<dbReference type="PIR" id="AI2201">
    <property type="entry name" value="AI2201"/>
</dbReference>
<dbReference type="RefSeq" id="WP_044521654.1">
    <property type="nucleotide sequence ID" value="NZ_RSCN01000001.1"/>
</dbReference>
<dbReference type="SMR" id="Q8YSC1"/>
<dbReference type="STRING" id="103690.gene:10495205"/>
<dbReference type="KEGG" id="ana:asr3168"/>
<dbReference type="eggNOG" id="ENOG503137T">
    <property type="taxonomic scope" value="Bacteria"/>
</dbReference>
<dbReference type="OrthoDB" id="486850at2"/>
<dbReference type="Proteomes" id="UP000002483">
    <property type="component" value="Chromosome"/>
</dbReference>
<dbReference type="GO" id="GO:1990904">
    <property type="term" value="C:ribonucleoprotein complex"/>
    <property type="evidence" value="ECO:0007669"/>
    <property type="project" value="UniProtKB-KW"/>
</dbReference>
<dbReference type="GO" id="GO:0005840">
    <property type="term" value="C:ribosome"/>
    <property type="evidence" value="ECO:0007669"/>
    <property type="project" value="UniProtKB-KW"/>
</dbReference>
<dbReference type="GO" id="GO:0003735">
    <property type="term" value="F:structural constituent of ribosome"/>
    <property type="evidence" value="ECO:0007669"/>
    <property type="project" value="InterPro"/>
</dbReference>
<dbReference type="GO" id="GO:0006412">
    <property type="term" value="P:translation"/>
    <property type="evidence" value="ECO:0007669"/>
    <property type="project" value="UniProtKB-UniRule"/>
</dbReference>
<dbReference type="Gene3D" id="3.30.390.140">
    <property type="match status" value="1"/>
</dbReference>
<dbReference type="HAMAP" id="MF_00619">
    <property type="entry name" value="Ribosomal_plastid_cS23"/>
    <property type="match status" value="1"/>
</dbReference>
<dbReference type="InterPro" id="IPR038447">
    <property type="entry name" value="PSRP-3/Ycf65_sf"/>
</dbReference>
<dbReference type="InterPro" id="IPR006924">
    <property type="entry name" value="Ribosomal_PSRP3/Ycf65"/>
</dbReference>
<dbReference type="NCBIfam" id="NF002740">
    <property type="entry name" value="PRK02724.1"/>
    <property type="match status" value="1"/>
</dbReference>
<dbReference type="PANTHER" id="PTHR35108">
    <property type="entry name" value="30S RIBOSOMAL PROTEIN 3, CHLOROPLASTIC"/>
    <property type="match status" value="1"/>
</dbReference>
<dbReference type="PANTHER" id="PTHR35108:SF1">
    <property type="entry name" value="OS04G0461100 PROTEIN"/>
    <property type="match status" value="1"/>
</dbReference>
<dbReference type="Pfam" id="PF04839">
    <property type="entry name" value="PSRP-3_Ycf65"/>
    <property type="match status" value="1"/>
</dbReference>
<evidence type="ECO:0000250" key="1"/>
<evidence type="ECO:0000255" key="2">
    <source>
        <dbReference type="HAMAP-Rule" id="MF_00619"/>
    </source>
</evidence>
<evidence type="ECO:0000305" key="3"/>
<proteinExistence type="inferred from homology"/>
<comment type="function">
    <text evidence="1">Probably a ribosomal protein or a ribosome-associated protein.</text>
</comment>
<comment type="subunit">
    <text evidence="3">Part of the 30S ribosomal subunit.</text>
</comment>
<comment type="similarity">
    <text evidence="3">Belongs to the chloroplast-specific ribosomal protein cS23 family.</text>
</comment>
<comment type="sequence caution" evidence="3">
    <conflict type="erroneous initiation">
        <sequence resource="EMBL-CDS" id="BAB74867"/>
    </conflict>
    <text>Truncated N-terminus.</text>
</comment>
<sequence>MTKFILKILWLDENVALAVDQVVGKGTSPLTKYFFWPRNDAWEELKKELESKHWISDLDRVELLNKATEVINYWQEEGRNRPMAEAQLKFPEVTFTGSA</sequence>
<gene>
    <name type="ordered locus">asr3168</name>
</gene>
<feature type="chain" id="PRO_0000216748" description="Probable small ribosomal subunit protein cS23">
    <location>
        <begin position="1"/>
        <end position="99"/>
    </location>
</feature>
<reference key="1">
    <citation type="journal article" date="2001" name="DNA Res.">
        <title>Complete genomic sequence of the filamentous nitrogen-fixing cyanobacterium Anabaena sp. strain PCC 7120.</title>
        <authorList>
            <person name="Kaneko T."/>
            <person name="Nakamura Y."/>
            <person name="Wolk C.P."/>
            <person name="Kuritz T."/>
            <person name="Sasamoto S."/>
            <person name="Watanabe A."/>
            <person name="Iriguchi M."/>
            <person name="Ishikawa A."/>
            <person name="Kawashima K."/>
            <person name="Kimura T."/>
            <person name="Kishida Y."/>
            <person name="Kohara M."/>
            <person name="Matsumoto M."/>
            <person name="Matsuno A."/>
            <person name="Muraki A."/>
            <person name="Nakazaki N."/>
            <person name="Shimpo S."/>
            <person name="Sugimoto M."/>
            <person name="Takazawa M."/>
            <person name="Yamada M."/>
            <person name="Yasuda M."/>
            <person name="Tabata S."/>
        </authorList>
    </citation>
    <scope>NUCLEOTIDE SEQUENCE [LARGE SCALE GENOMIC DNA]</scope>
    <source>
        <strain>PCC 7120 / SAG 25.82 / UTEX 2576</strain>
    </source>
</reference>
<protein>
    <recommendedName>
        <fullName evidence="2">Probable small ribosomal subunit protein cS23</fullName>
    </recommendedName>
    <alternativeName>
        <fullName>Probable 30S ribosomal protein PSRP-3</fullName>
    </alternativeName>
    <alternativeName>
        <fullName>Ycf65-like protein</fullName>
    </alternativeName>
</protein>
<name>RRP3_NOSS1</name>
<organism>
    <name type="scientific">Nostoc sp. (strain PCC 7120 / SAG 25.82 / UTEX 2576)</name>
    <dbReference type="NCBI Taxonomy" id="103690"/>
    <lineage>
        <taxon>Bacteria</taxon>
        <taxon>Bacillati</taxon>
        <taxon>Cyanobacteriota</taxon>
        <taxon>Cyanophyceae</taxon>
        <taxon>Nostocales</taxon>
        <taxon>Nostocaceae</taxon>
        <taxon>Nostoc</taxon>
    </lineage>
</organism>
<accession>Q8YSC1</accession>
<keyword id="KW-1185">Reference proteome</keyword>
<keyword id="KW-0687">Ribonucleoprotein</keyword>
<keyword id="KW-0689">Ribosomal protein</keyword>